<name>Y690_BORPE</name>
<gene>
    <name type="ordered locus">BP0690</name>
</gene>
<comment type="function">
    <text evidence="1">Displays ATPase and GTPase activities.</text>
</comment>
<comment type="similarity">
    <text evidence="1">Belongs to the RapZ-like family.</text>
</comment>
<sequence length="290" mass="32517">MLRVVLITGISGSGKSVALRLLEDAGFTCIDNLPVRFLAEFIANARDDAMERVAVAIDVRSPGELAELPDVITASRAMGTSLSVIFLDANTDTLVQRYSESRRRHPLTDRLARGGKTPSLAECIALERELMAPLRDQEHVIDTSDLTPGQLRAWIRDLIQADRPPLVLTFESFAYKRGVPSDADLMFDVRCLPNPYYDRTLRPLTGRDEPVATWLGGFDIVTQMIDDIAAFIRRWLPQYTQDTRNYLTVAIGCTGGQHRSVYVVEQLARRFSDHDPLLVRHRTQLPDDPA</sequence>
<evidence type="ECO:0000255" key="1">
    <source>
        <dbReference type="HAMAP-Rule" id="MF_00636"/>
    </source>
</evidence>
<keyword id="KW-0067">ATP-binding</keyword>
<keyword id="KW-0342">GTP-binding</keyword>
<keyword id="KW-0547">Nucleotide-binding</keyword>
<keyword id="KW-1185">Reference proteome</keyword>
<accession>Q7W014</accession>
<protein>
    <recommendedName>
        <fullName evidence="1">Nucleotide-binding protein BP0690</fullName>
    </recommendedName>
</protein>
<feature type="chain" id="PRO_0000107693" description="Nucleotide-binding protein BP0690">
    <location>
        <begin position="1"/>
        <end position="290"/>
    </location>
</feature>
<feature type="binding site" evidence="1">
    <location>
        <begin position="9"/>
        <end position="16"/>
    </location>
    <ligand>
        <name>ATP</name>
        <dbReference type="ChEBI" id="CHEBI:30616"/>
    </ligand>
</feature>
<feature type="binding site" evidence="1">
    <location>
        <begin position="58"/>
        <end position="61"/>
    </location>
    <ligand>
        <name>GTP</name>
        <dbReference type="ChEBI" id="CHEBI:37565"/>
    </ligand>
</feature>
<dbReference type="EMBL" id="BX640413">
    <property type="protein sequence ID" value="CAE41001.1"/>
    <property type="molecule type" value="Genomic_DNA"/>
</dbReference>
<dbReference type="RefSeq" id="NP_879525.1">
    <property type="nucleotide sequence ID" value="NC_002929.2"/>
</dbReference>
<dbReference type="SMR" id="Q7W014"/>
<dbReference type="STRING" id="257313.BP0690"/>
<dbReference type="PaxDb" id="257313-BP0690"/>
<dbReference type="KEGG" id="bpe:BP0690"/>
<dbReference type="PATRIC" id="fig|257313.5.peg.739"/>
<dbReference type="eggNOG" id="COG1660">
    <property type="taxonomic scope" value="Bacteria"/>
</dbReference>
<dbReference type="HOGENOM" id="CLU_059558_1_1_4"/>
<dbReference type="Proteomes" id="UP000002676">
    <property type="component" value="Chromosome"/>
</dbReference>
<dbReference type="GO" id="GO:0005524">
    <property type="term" value="F:ATP binding"/>
    <property type="evidence" value="ECO:0007669"/>
    <property type="project" value="UniProtKB-UniRule"/>
</dbReference>
<dbReference type="GO" id="GO:0005525">
    <property type="term" value="F:GTP binding"/>
    <property type="evidence" value="ECO:0007669"/>
    <property type="project" value="UniProtKB-UniRule"/>
</dbReference>
<dbReference type="Gene3D" id="3.40.50.300">
    <property type="entry name" value="P-loop containing nucleotide triphosphate hydrolases"/>
    <property type="match status" value="1"/>
</dbReference>
<dbReference type="HAMAP" id="MF_00636">
    <property type="entry name" value="RapZ_like"/>
    <property type="match status" value="1"/>
</dbReference>
<dbReference type="InterPro" id="IPR027417">
    <property type="entry name" value="P-loop_NTPase"/>
</dbReference>
<dbReference type="InterPro" id="IPR005337">
    <property type="entry name" value="RapZ-like"/>
</dbReference>
<dbReference type="InterPro" id="IPR053930">
    <property type="entry name" value="RapZ-like_N"/>
</dbReference>
<dbReference type="InterPro" id="IPR053931">
    <property type="entry name" value="RapZ_C"/>
</dbReference>
<dbReference type="NCBIfam" id="NF003828">
    <property type="entry name" value="PRK05416.1"/>
    <property type="match status" value="1"/>
</dbReference>
<dbReference type="PANTHER" id="PTHR30448">
    <property type="entry name" value="RNASE ADAPTER PROTEIN RAPZ"/>
    <property type="match status" value="1"/>
</dbReference>
<dbReference type="PANTHER" id="PTHR30448:SF0">
    <property type="entry name" value="RNASE ADAPTER PROTEIN RAPZ"/>
    <property type="match status" value="1"/>
</dbReference>
<dbReference type="Pfam" id="PF22740">
    <property type="entry name" value="PapZ_C"/>
    <property type="match status" value="1"/>
</dbReference>
<dbReference type="Pfam" id="PF03668">
    <property type="entry name" value="RapZ-like_N"/>
    <property type="match status" value="1"/>
</dbReference>
<dbReference type="PIRSF" id="PIRSF005052">
    <property type="entry name" value="P-loopkin"/>
    <property type="match status" value="1"/>
</dbReference>
<dbReference type="SUPFAM" id="SSF52540">
    <property type="entry name" value="P-loop containing nucleoside triphosphate hydrolases"/>
    <property type="match status" value="1"/>
</dbReference>
<organism>
    <name type="scientific">Bordetella pertussis (strain Tohama I / ATCC BAA-589 / NCTC 13251)</name>
    <dbReference type="NCBI Taxonomy" id="257313"/>
    <lineage>
        <taxon>Bacteria</taxon>
        <taxon>Pseudomonadati</taxon>
        <taxon>Pseudomonadota</taxon>
        <taxon>Betaproteobacteria</taxon>
        <taxon>Burkholderiales</taxon>
        <taxon>Alcaligenaceae</taxon>
        <taxon>Bordetella</taxon>
    </lineage>
</organism>
<reference key="1">
    <citation type="journal article" date="2003" name="Nat. Genet.">
        <title>Comparative analysis of the genome sequences of Bordetella pertussis, Bordetella parapertussis and Bordetella bronchiseptica.</title>
        <authorList>
            <person name="Parkhill J."/>
            <person name="Sebaihia M."/>
            <person name="Preston A."/>
            <person name="Murphy L.D."/>
            <person name="Thomson N.R."/>
            <person name="Harris D.E."/>
            <person name="Holden M.T.G."/>
            <person name="Churcher C.M."/>
            <person name="Bentley S.D."/>
            <person name="Mungall K.L."/>
            <person name="Cerdeno-Tarraga A.-M."/>
            <person name="Temple L."/>
            <person name="James K.D."/>
            <person name="Harris B."/>
            <person name="Quail M.A."/>
            <person name="Achtman M."/>
            <person name="Atkin R."/>
            <person name="Baker S."/>
            <person name="Basham D."/>
            <person name="Bason N."/>
            <person name="Cherevach I."/>
            <person name="Chillingworth T."/>
            <person name="Collins M."/>
            <person name="Cronin A."/>
            <person name="Davis P."/>
            <person name="Doggett J."/>
            <person name="Feltwell T."/>
            <person name="Goble A."/>
            <person name="Hamlin N."/>
            <person name="Hauser H."/>
            <person name="Holroyd S."/>
            <person name="Jagels K."/>
            <person name="Leather S."/>
            <person name="Moule S."/>
            <person name="Norberczak H."/>
            <person name="O'Neil S."/>
            <person name="Ormond D."/>
            <person name="Price C."/>
            <person name="Rabbinowitsch E."/>
            <person name="Rutter S."/>
            <person name="Sanders M."/>
            <person name="Saunders D."/>
            <person name="Seeger K."/>
            <person name="Sharp S."/>
            <person name="Simmonds M."/>
            <person name="Skelton J."/>
            <person name="Squares R."/>
            <person name="Squares S."/>
            <person name="Stevens K."/>
            <person name="Unwin L."/>
            <person name="Whitehead S."/>
            <person name="Barrell B.G."/>
            <person name="Maskell D.J."/>
        </authorList>
    </citation>
    <scope>NUCLEOTIDE SEQUENCE [LARGE SCALE GENOMIC DNA]</scope>
    <source>
        <strain>Tohama I / ATCC BAA-589 / NCTC 13251</strain>
    </source>
</reference>
<proteinExistence type="inferred from homology"/>